<keyword id="KW-0131">Cell cycle</keyword>
<keyword id="KW-0132">Cell division</keyword>
<keyword id="KW-0133">Cell shape</keyword>
<keyword id="KW-0961">Cell wall biogenesis/degradation</keyword>
<keyword id="KW-0963">Cytoplasm</keyword>
<keyword id="KW-0573">Peptidoglycan synthesis</keyword>
<keyword id="KW-0670">Pyruvate</keyword>
<keyword id="KW-1185">Reference proteome</keyword>
<keyword id="KW-0808">Transferase</keyword>
<proteinExistence type="inferred from homology"/>
<reference key="1">
    <citation type="submission" date="2006-01" db="EMBL/GenBank/DDBJ databases">
        <title>Complete sequence of Novosphingobium aromaticivorans DSM 12444.</title>
        <authorList>
            <consortium name="US DOE Joint Genome Institute"/>
            <person name="Copeland A."/>
            <person name="Lucas S."/>
            <person name="Lapidus A."/>
            <person name="Barry K."/>
            <person name="Detter J.C."/>
            <person name="Glavina T."/>
            <person name="Hammon N."/>
            <person name="Israni S."/>
            <person name="Pitluck S."/>
            <person name="Chain P."/>
            <person name="Malfatti S."/>
            <person name="Shin M."/>
            <person name="Vergez L."/>
            <person name="Schmutz J."/>
            <person name="Larimer F."/>
            <person name="Land M."/>
            <person name="Kyrpides N."/>
            <person name="Ivanova N."/>
            <person name="Fredrickson J."/>
            <person name="Balkwill D."/>
            <person name="Romine M.F."/>
            <person name="Richardson P."/>
        </authorList>
    </citation>
    <scope>NUCLEOTIDE SEQUENCE [LARGE SCALE GENOMIC DNA]</scope>
    <source>
        <strain>ATCC 700278 / DSM 12444 / CCUG 56034 / CIP 105152 / NBRC 16084 / F199</strain>
    </source>
</reference>
<comment type="function">
    <text evidence="1">Cell wall formation. Adds enolpyruvyl to UDP-N-acetylglucosamine.</text>
</comment>
<comment type="catalytic activity">
    <reaction evidence="1">
        <text>phosphoenolpyruvate + UDP-N-acetyl-alpha-D-glucosamine = UDP-N-acetyl-3-O-(1-carboxyvinyl)-alpha-D-glucosamine + phosphate</text>
        <dbReference type="Rhea" id="RHEA:18681"/>
        <dbReference type="ChEBI" id="CHEBI:43474"/>
        <dbReference type="ChEBI" id="CHEBI:57705"/>
        <dbReference type="ChEBI" id="CHEBI:58702"/>
        <dbReference type="ChEBI" id="CHEBI:68483"/>
        <dbReference type="EC" id="2.5.1.7"/>
    </reaction>
</comment>
<comment type="pathway">
    <text evidence="1">Cell wall biogenesis; peptidoglycan biosynthesis.</text>
</comment>
<comment type="subcellular location">
    <subcellularLocation>
        <location evidence="1">Cytoplasm</location>
    </subcellularLocation>
</comment>
<comment type="similarity">
    <text evidence="1">Belongs to the EPSP synthase family. MurA subfamily.</text>
</comment>
<dbReference type="EC" id="2.5.1.7" evidence="1"/>
<dbReference type="EMBL" id="CP000248">
    <property type="protein sequence ID" value="ABD24897.1"/>
    <property type="molecule type" value="Genomic_DNA"/>
</dbReference>
<dbReference type="RefSeq" id="WP_011444111.1">
    <property type="nucleotide sequence ID" value="NC_007794.1"/>
</dbReference>
<dbReference type="SMR" id="Q2GB76"/>
<dbReference type="STRING" id="279238.Saro_0449"/>
<dbReference type="KEGG" id="nar:Saro_0449"/>
<dbReference type="eggNOG" id="COG0766">
    <property type="taxonomic scope" value="Bacteria"/>
</dbReference>
<dbReference type="HOGENOM" id="CLU_027387_0_0_5"/>
<dbReference type="UniPathway" id="UPA00219"/>
<dbReference type="Proteomes" id="UP000009134">
    <property type="component" value="Chromosome"/>
</dbReference>
<dbReference type="GO" id="GO:0005737">
    <property type="term" value="C:cytoplasm"/>
    <property type="evidence" value="ECO:0007669"/>
    <property type="project" value="UniProtKB-SubCell"/>
</dbReference>
<dbReference type="GO" id="GO:0008760">
    <property type="term" value="F:UDP-N-acetylglucosamine 1-carboxyvinyltransferase activity"/>
    <property type="evidence" value="ECO:0007669"/>
    <property type="project" value="UniProtKB-UniRule"/>
</dbReference>
<dbReference type="GO" id="GO:0051301">
    <property type="term" value="P:cell division"/>
    <property type="evidence" value="ECO:0007669"/>
    <property type="project" value="UniProtKB-KW"/>
</dbReference>
<dbReference type="GO" id="GO:0071555">
    <property type="term" value="P:cell wall organization"/>
    <property type="evidence" value="ECO:0007669"/>
    <property type="project" value="UniProtKB-KW"/>
</dbReference>
<dbReference type="GO" id="GO:0009252">
    <property type="term" value="P:peptidoglycan biosynthetic process"/>
    <property type="evidence" value="ECO:0007669"/>
    <property type="project" value="UniProtKB-UniRule"/>
</dbReference>
<dbReference type="GO" id="GO:0008360">
    <property type="term" value="P:regulation of cell shape"/>
    <property type="evidence" value="ECO:0007669"/>
    <property type="project" value="UniProtKB-KW"/>
</dbReference>
<dbReference type="GO" id="GO:0019277">
    <property type="term" value="P:UDP-N-acetylgalactosamine biosynthetic process"/>
    <property type="evidence" value="ECO:0007669"/>
    <property type="project" value="InterPro"/>
</dbReference>
<dbReference type="CDD" id="cd01555">
    <property type="entry name" value="UdpNAET"/>
    <property type="match status" value="1"/>
</dbReference>
<dbReference type="FunFam" id="3.65.10.10:FF:000001">
    <property type="entry name" value="UDP-N-acetylglucosamine 1-carboxyvinyltransferase"/>
    <property type="match status" value="1"/>
</dbReference>
<dbReference type="Gene3D" id="3.65.10.10">
    <property type="entry name" value="Enolpyruvate transferase domain"/>
    <property type="match status" value="2"/>
</dbReference>
<dbReference type="HAMAP" id="MF_00111">
    <property type="entry name" value="MurA"/>
    <property type="match status" value="1"/>
</dbReference>
<dbReference type="InterPro" id="IPR001986">
    <property type="entry name" value="Enolpyruvate_Tfrase_dom"/>
</dbReference>
<dbReference type="InterPro" id="IPR036968">
    <property type="entry name" value="Enolpyruvate_Tfrase_sf"/>
</dbReference>
<dbReference type="InterPro" id="IPR050068">
    <property type="entry name" value="MurA_subfamily"/>
</dbReference>
<dbReference type="InterPro" id="IPR013792">
    <property type="entry name" value="RNA3'P_cycl/enolpyr_Trfase_a/b"/>
</dbReference>
<dbReference type="InterPro" id="IPR005750">
    <property type="entry name" value="UDP_GlcNAc_COvinyl_MurA"/>
</dbReference>
<dbReference type="NCBIfam" id="TIGR01072">
    <property type="entry name" value="murA"/>
    <property type="match status" value="1"/>
</dbReference>
<dbReference type="NCBIfam" id="NF006873">
    <property type="entry name" value="PRK09369.1"/>
    <property type="match status" value="1"/>
</dbReference>
<dbReference type="PANTHER" id="PTHR43783">
    <property type="entry name" value="UDP-N-ACETYLGLUCOSAMINE 1-CARBOXYVINYLTRANSFERASE"/>
    <property type="match status" value="1"/>
</dbReference>
<dbReference type="PANTHER" id="PTHR43783:SF1">
    <property type="entry name" value="UDP-N-ACETYLGLUCOSAMINE 1-CARBOXYVINYLTRANSFERASE"/>
    <property type="match status" value="1"/>
</dbReference>
<dbReference type="Pfam" id="PF00275">
    <property type="entry name" value="EPSP_synthase"/>
    <property type="match status" value="1"/>
</dbReference>
<dbReference type="SUPFAM" id="SSF55205">
    <property type="entry name" value="EPT/RTPC-like"/>
    <property type="match status" value="1"/>
</dbReference>
<evidence type="ECO:0000255" key="1">
    <source>
        <dbReference type="HAMAP-Rule" id="MF_00111"/>
    </source>
</evidence>
<gene>
    <name evidence="1" type="primary">murA</name>
    <name type="ordered locus">Saro_0449</name>
</gene>
<name>MURA_NOVAD</name>
<accession>Q2GB76</accession>
<sequence length="427" mass="45046">MDKIIIRGGKRLSGAVPVSGAKNSALTLLPCALLTDEPVTLRNLPRLADIDGFQHLMNQFGVSTSIAGARPEDFGRVMTLQATRLTSTVAPYDLVRKMRASILVLGPMLARAGEATVSLPGGCAIGNRPIDLHLKALEALGAQIELAAGYVRAIAPDGGLPGGRYSFPVVSVGATENALMAAVLAKGKSTLHNAAREPEIVDLCNLLVAMGAQIEGIGTSDLTIHGVDRLHGATYMVMPDRIEAGSYACAAAITGGEVMLNGARIEDMEATVQALRDAGVHVEPRKGGIYVAADGPLKPVTISTAPYPGFATDMQAQLMAMLCLAHGSSVLTETIFENRYMHVPELNRMGARIETKGRTAVVHGVEKLTGAEVMATDLRASMSLVIAGLAAEGETQVHRLYHLDRGYERLEEKLSLLGAEIERVGGD</sequence>
<protein>
    <recommendedName>
        <fullName evidence="1">UDP-N-acetylglucosamine 1-carboxyvinyltransferase</fullName>
        <ecNumber evidence="1">2.5.1.7</ecNumber>
    </recommendedName>
    <alternativeName>
        <fullName evidence="1">Enoylpyruvate transferase</fullName>
    </alternativeName>
    <alternativeName>
        <fullName evidence="1">UDP-N-acetylglucosamine enolpyruvyl transferase</fullName>
        <shortName evidence="1">EPT</shortName>
    </alternativeName>
</protein>
<organism>
    <name type="scientific">Novosphingobium aromaticivorans (strain ATCC 700278 / DSM 12444 / CCUG 56034 / CIP 105152 / NBRC 16084 / F199)</name>
    <dbReference type="NCBI Taxonomy" id="279238"/>
    <lineage>
        <taxon>Bacteria</taxon>
        <taxon>Pseudomonadati</taxon>
        <taxon>Pseudomonadota</taxon>
        <taxon>Alphaproteobacteria</taxon>
        <taxon>Sphingomonadales</taxon>
        <taxon>Sphingomonadaceae</taxon>
        <taxon>Novosphingobium</taxon>
    </lineage>
</organism>
<feature type="chain" id="PRO_1000023062" description="UDP-N-acetylglucosamine 1-carboxyvinyltransferase">
    <location>
        <begin position="1"/>
        <end position="427"/>
    </location>
</feature>
<feature type="active site" description="Proton donor" evidence="1">
    <location>
        <position position="123"/>
    </location>
</feature>
<feature type="binding site" evidence="1">
    <location>
        <begin position="22"/>
        <end position="23"/>
    </location>
    <ligand>
        <name>phosphoenolpyruvate</name>
        <dbReference type="ChEBI" id="CHEBI:58702"/>
    </ligand>
</feature>
<feature type="binding site" evidence="1">
    <location>
        <position position="99"/>
    </location>
    <ligand>
        <name>UDP-N-acetyl-alpha-D-glucosamine</name>
        <dbReference type="ChEBI" id="CHEBI:57705"/>
    </ligand>
</feature>
<feature type="binding site" evidence="1">
    <location>
        <begin position="128"/>
        <end position="132"/>
    </location>
    <ligand>
        <name>UDP-N-acetyl-alpha-D-glucosamine</name>
        <dbReference type="ChEBI" id="CHEBI:57705"/>
    </ligand>
</feature>
<feature type="binding site" evidence="1">
    <location>
        <position position="313"/>
    </location>
    <ligand>
        <name>UDP-N-acetyl-alpha-D-glucosamine</name>
        <dbReference type="ChEBI" id="CHEBI:57705"/>
    </ligand>
</feature>
<feature type="binding site" evidence="1">
    <location>
        <position position="335"/>
    </location>
    <ligand>
        <name>UDP-N-acetyl-alpha-D-glucosamine</name>
        <dbReference type="ChEBI" id="CHEBI:57705"/>
    </ligand>
</feature>
<feature type="modified residue" description="2-(S-cysteinyl)pyruvic acid O-phosphothioketal" evidence="1">
    <location>
        <position position="123"/>
    </location>
</feature>